<accession>B0JLH2</accession>
<comment type="function">
    <text evidence="1">Key component of the KaiABC oscillator complex, which constitutes the main circadian regulator in cyanobacteria. Complex composition changes during the circadian cycle to control KaiC phosphorylation. KaiA stimulates KaiC autophosphorylation, while KaiB sequesters KaiA, leading to KaiC autodephosphorylation. Phospho-Ser-431 KaiC accumulation triggers binding of KaiB to form the KaiB(6):KaiC(6) complex, leading to changes in output regulators CikA and SasA. KaiB switches to a thioredoxin-like fold (KaiB(fs)) when bound to KaiC. KaiB(6):KaiC(6) formation exposes a site for KaiA binding that sequesters KaiA from KaiC, making the KaiC(6):KaiB(6):KaiA(12) complex that results in KaiC autodephosphorylation.</text>
</comment>
<comment type="function">
    <text evidence="1">A metamorphic protein which reversibly switches between an inactive tetrameric fold and a rare, thioredoxin-like monomeric fold (KaiB(fs)). KaiB(fs) binds phospho-KaiC, KaiA and CikA. KaiA and CikA compete for binding to KaiB(fs), and KaiB(fs) and SasA compete for binding to KaiC, thus the clock oscillator and output signal pathway are tightly coupled.</text>
</comment>
<comment type="subunit">
    <text evidence="1">The KaiABC complex composition changes during the circadian cycle to control KaiC phosphorylation. Complexes KaiC(6), KaiA(2-4):KaiC(6), KaiB(6):KaiC(6) and KaiC(6):KaiB(6):KaiA(12) are among the most important forms, many form cooperatively. Undergoes a major conformational rearrangment; in the free state forms homotetramers as a dimer of dimers. When bound to the CI domain of KaiC switches to a monomeric thioredoxin-fold (KaiB(fs)). KaiB(fs) binds CikA, leading it to dephosphorylate phospho-RpaA.</text>
</comment>
<comment type="domain">
    <text evidence="1">Has 2 forms, fold switches to a thioredoxin-like fold (KaiB(fs)) when bound to KaiC.</text>
</comment>
<comment type="similarity">
    <text evidence="1">Belongs to the KaiB family.</text>
</comment>
<name>KAIB_MICAN</name>
<dbReference type="EMBL" id="AP009552">
    <property type="protein sequence ID" value="BAG02996.1"/>
    <property type="molecule type" value="Genomic_DNA"/>
</dbReference>
<dbReference type="RefSeq" id="WP_002733742.1">
    <property type="nucleotide sequence ID" value="NC_010296.1"/>
</dbReference>
<dbReference type="SMR" id="B0JLH2"/>
<dbReference type="STRING" id="449447.MAE_31740"/>
<dbReference type="PaxDb" id="449447-MAE_31740"/>
<dbReference type="EnsemblBacteria" id="BAG02996">
    <property type="protein sequence ID" value="BAG02996"/>
    <property type="gene ID" value="MAE_31740"/>
</dbReference>
<dbReference type="GeneID" id="66707389"/>
<dbReference type="KEGG" id="mar:MAE_31740"/>
<dbReference type="eggNOG" id="COG4251">
    <property type="taxonomic scope" value="Bacteria"/>
</dbReference>
<dbReference type="HOGENOM" id="CLU_144073_0_0_3"/>
<dbReference type="BioCyc" id="MAER449447:MAE_RS13750-MONOMER"/>
<dbReference type="Proteomes" id="UP000001510">
    <property type="component" value="Chromosome"/>
</dbReference>
<dbReference type="GO" id="GO:0007623">
    <property type="term" value="P:circadian rhythm"/>
    <property type="evidence" value="ECO:0007669"/>
    <property type="project" value="UniProtKB-UniRule"/>
</dbReference>
<dbReference type="CDD" id="cd02978">
    <property type="entry name" value="KaiB_like"/>
    <property type="match status" value="1"/>
</dbReference>
<dbReference type="FunFam" id="3.40.30.10:FF:000180">
    <property type="entry name" value="Circadian clock protein KaiB"/>
    <property type="match status" value="1"/>
</dbReference>
<dbReference type="Gene3D" id="3.40.30.10">
    <property type="entry name" value="Glutaredoxin"/>
    <property type="match status" value="1"/>
</dbReference>
<dbReference type="HAMAP" id="MF_01835">
    <property type="entry name" value="KaiB"/>
    <property type="match status" value="1"/>
</dbReference>
<dbReference type="InterPro" id="IPR013474">
    <property type="entry name" value="Circ_KaiB"/>
</dbReference>
<dbReference type="InterPro" id="IPR039022">
    <property type="entry name" value="KaiB-like"/>
</dbReference>
<dbReference type="InterPro" id="IPR011649">
    <property type="entry name" value="KaiB_domain"/>
</dbReference>
<dbReference type="InterPro" id="IPR036249">
    <property type="entry name" value="Thioredoxin-like_sf"/>
</dbReference>
<dbReference type="NCBIfam" id="TIGR02654">
    <property type="entry name" value="circ_KaiB"/>
    <property type="match status" value="1"/>
</dbReference>
<dbReference type="NCBIfam" id="NF006798">
    <property type="entry name" value="PRK09301.1"/>
    <property type="match status" value="1"/>
</dbReference>
<dbReference type="PANTHER" id="PTHR41709:SF2">
    <property type="entry name" value="CIRCADIAN CLOCK PROTEIN KAIB2"/>
    <property type="match status" value="1"/>
</dbReference>
<dbReference type="PANTHER" id="PTHR41709">
    <property type="entry name" value="KAIB-LIKE PROTEIN 1"/>
    <property type="match status" value="1"/>
</dbReference>
<dbReference type="Pfam" id="PF07689">
    <property type="entry name" value="KaiB"/>
    <property type="match status" value="1"/>
</dbReference>
<dbReference type="SMART" id="SM01248">
    <property type="entry name" value="KaiB"/>
    <property type="match status" value="1"/>
</dbReference>
<dbReference type="SUPFAM" id="SSF52833">
    <property type="entry name" value="Thioredoxin-like"/>
    <property type="match status" value="1"/>
</dbReference>
<evidence type="ECO:0000255" key="1">
    <source>
        <dbReference type="HAMAP-Rule" id="MF_01835"/>
    </source>
</evidence>
<proteinExistence type="inferred from homology"/>
<gene>
    <name evidence="1" type="primary">kaiB</name>
    <name type="ordered locus">MAE_31740</name>
</gene>
<organism>
    <name type="scientific">Microcystis aeruginosa (strain NIES-843 / IAM M-2473)</name>
    <dbReference type="NCBI Taxonomy" id="449447"/>
    <lineage>
        <taxon>Bacteria</taxon>
        <taxon>Bacillati</taxon>
        <taxon>Cyanobacteriota</taxon>
        <taxon>Cyanophyceae</taxon>
        <taxon>Oscillatoriophycideae</taxon>
        <taxon>Chroococcales</taxon>
        <taxon>Microcystaceae</taxon>
        <taxon>Microcystis</taxon>
    </lineage>
</organism>
<feature type="chain" id="PRO_1000088438" description="Circadian clock oscillator protein KaiB">
    <location>
        <begin position="1"/>
        <end position="104"/>
    </location>
</feature>
<protein>
    <recommendedName>
        <fullName evidence="1">Circadian clock oscillator protein KaiB</fullName>
    </recommendedName>
</protein>
<keyword id="KW-0090">Biological rhythms</keyword>
<reference key="1">
    <citation type="journal article" date="2007" name="DNA Res.">
        <title>Complete genomic structure of the bloom-forming toxic cyanobacterium Microcystis aeruginosa NIES-843.</title>
        <authorList>
            <person name="Kaneko T."/>
            <person name="Nakajima N."/>
            <person name="Okamoto S."/>
            <person name="Suzuki I."/>
            <person name="Tanabe Y."/>
            <person name="Tamaoki M."/>
            <person name="Nakamura Y."/>
            <person name="Kasai F."/>
            <person name="Watanabe A."/>
            <person name="Kawashima K."/>
            <person name="Kishida Y."/>
            <person name="Ono A."/>
            <person name="Shimizu Y."/>
            <person name="Takahashi C."/>
            <person name="Minami C."/>
            <person name="Fujishiro T."/>
            <person name="Kohara M."/>
            <person name="Katoh M."/>
            <person name="Nakazaki N."/>
            <person name="Nakayama S."/>
            <person name="Yamada M."/>
            <person name="Tabata S."/>
            <person name="Watanabe M.M."/>
        </authorList>
    </citation>
    <scope>NUCLEOTIDE SEQUENCE [LARGE SCALE GENOMIC DNA]</scope>
    <source>
        <strain>NIES-843 / IAM M-247</strain>
    </source>
</reference>
<sequence length="104" mass="11781">MSVFKKTYVLKLYVAGNTPNSVRALKTLKNILEEEFQGVYALKVIDVLKNPQLAEEDKILATPTLAKVLPPPVRKIIGDLSDREKVLIGLDLLYEEIRERENDS</sequence>